<gene>
    <name type="ordered locus">PP_3341</name>
</gene>
<keyword id="KW-0238">DNA-binding</keyword>
<keyword id="KW-0479">Metal-binding</keyword>
<keyword id="KW-0533">Nickel</keyword>
<keyword id="KW-1185">Reference proteome</keyword>
<keyword id="KW-0804">Transcription</keyword>
<keyword id="KW-0805">Transcription regulation</keyword>
<name>NIKR_PSEPK</name>
<sequence>MQRITITLDEELLDVIDRRVATQGYQGRSEAIRDLLRAGMRESEALPDDAACVAVVSYLYDHSTRELPRRLNQTLHAHHDLTRSTLHVHLDAGHCLEVSVLQGESGRIGELSRQLMVERGVEHGQVQVIPAPGQPKVR</sequence>
<organism>
    <name type="scientific">Pseudomonas putida (strain ATCC 47054 / DSM 6125 / CFBP 8728 / NCIMB 11950 / KT2440)</name>
    <dbReference type="NCBI Taxonomy" id="160488"/>
    <lineage>
        <taxon>Bacteria</taxon>
        <taxon>Pseudomonadati</taxon>
        <taxon>Pseudomonadota</taxon>
        <taxon>Gammaproteobacteria</taxon>
        <taxon>Pseudomonadales</taxon>
        <taxon>Pseudomonadaceae</taxon>
        <taxon>Pseudomonas</taxon>
    </lineage>
</organism>
<comment type="function">
    <text evidence="1">Transcriptional regulator.</text>
</comment>
<comment type="cofactor">
    <cofactor evidence="1">
        <name>Ni(2+)</name>
        <dbReference type="ChEBI" id="CHEBI:49786"/>
    </cofactor>
    <text evidence="1">Binds 1 nickel ion per subunit.</text>
</comment>
<comment type="similarity">
    <text evidence="1">Belongs to the transcriptional regulatory CopG/NikR family.</text>
</comment>
<evidence type="ECO:0000255" key="1">
    <source>
        <dbReference type="HAMAP-Rule" id="MF_00476"/>
    </source>
</evidence>
<dbReference type="EMBL" id="AE015451">
    <property type="protein sequence ID" value="AAN68945.1"/>
    <property type="molecule type" value="Genomic_DNA"/>
</dbReference>
<dbReference type="RefSeq" id="NP_745481.1">
    <property type="nucleotide sequence ID" value="NC_002947.4"/>
</dbReference>
<dbReference type="SMR" id="Q88HL5"/>
<dbReference type="STRING" id="160488.PP_3341"/>
<dbReference type="PaxDb" id="160488-PP_3341"/>
<dbReference type="KEGG" id="ppu:PP_3341"/>
<dbReference type="PATRIC" id="fig|160488.4.peg.3553"/>
<dbReference type="eggNOG" id="COG0864">
    <property type="taxonomic scope" value="Bacteria"/>
</dbReference>
<dbReference type="HOGENOM" id="CLU_113319_1_4_6"/>
<dbReference type="OrthoDB" id="9806294at2"/>
<dbReference type="PhylomeDB" id="Q88HL5"/>
<dbReference type="BioCyc" id="PPUT160488:G1G01-3574-MONOMER"/>
<dbReference type="Proteomes" id="UP000000556">
    <property type="component" value="Chromosome"/>
</dbReference>
<dbReference type="GO" id="GO:0003677">
    <property type="term" value="F:DNA binding"/>
    <property type="evidence" value="ECO:0007669"/>
    <property type="project" value="UniProtKB-KW"/>
</dbReference>
<dbReference type="GO" id="GO:0003700">
    <property type="term" value="F:DNA-binding transcription factor activity"/>
    <property type="evidence" value="ECO:0007669"/>
    <property type="project" value="UniProtKB-UniRule"/>
</dbReference>
<dbReference type="GO" id="GO:0016151">
    <property type="term" value="F:nickel cation binding"/>
    <property type="evidence" value="ECO:0007669"/>
    <property type="project" value="UniProtKB-UniRule"/>
</dbReference>
<dbReference type="GO" id="GO:0010045">
    <property type="term" value="P:response to nickel cation"/>
    <property type="evidence" value="ECO:0007669"/>
    <property type="project" value="InterPro"/>
</dbReference>
<dbReference type="CDD" id="cd22231">
    <property type="entry name" value="RHH_NikR_HicB-like"/>
    <property type="match status" value="1"/>
</dbReference>
<dbReference type="Gene3D" id="3.30.70.1150">
    <property type="entry name" value="ACT-like. Chain A, domain 2"/>
    <property type="match status" value="1"/>
</dbReference>
<dbReference type="Gene3D" id="1.10.1220.10">
    <property type="entry name" value="Met repressor-like"/>
    <property type="match status" value="1"/>
</dbReference>
<dbReference type="HAMAP" id="MF_00476">
    <property type="entry name" value="NikR"/>
    <property type="match status" value="1"/>
</dbReference>
<dbReference type="InterPro" id="IPR027271">
    <property type="entry name" value="Acetolactate_synth/TF_NikR_C"/>
</dbReference>
<dbReference type="InterPro" id="IPR045865">
    <property type="entry name" value="ACT-like_dom_sf"/>
</dbReference>
<dbReference type="InterPro" id="IPR013321">
    <property type="entry name" value="Arc_rbn_hlx_hlx"/>
</dbReference>
<dbReference type="InterPro" id="IPR002145">
    <property type="entry name" value="CopG"/>
</dbReference>
<dbReference type="InterPro" id="IPR050192">
    <property type="entry name" value="CopG/NikR_regulator"/>
</dbReference>
<dbReference type="InterPro" id="IPR022988">
    <property type="entry name" value="Ni_resp_reg_NikR"/>
</dbReference>
<dbReference type="InterPro" id="IPR014160">
    <property type="entry name" value="Nickel_NikR_proteobac"/>
</dbReference>
<dbReference type="InterPro" id="IPR010985">
    <property type="entry name" value="Ribbon_hlx_hlx"/>
</dbReference>
<dbReference type="InterPro" id="IPR014864">
    <property type="entry name" value="TF_NikR_Ni-bd_C"/>
</dbReference>
<dbReference type="NCBIfam" id="TIGR02793">
    <property type="entry name" value="nikR"/>
    <property type="match status" value="1"/>
</dbReference>
<dbReference type="NCBIfam" id="NF002815">
    <property type="entry name" value="PRK02967.1"/>
    <property type="match status" value="1"/>
</dbReference>
<dbReference type="NCBIfam" id="NF003381">
    <property type="entry name" value="PRK04460.1"/>
    <property type="match status" value="1"/>
</dbReference>
<dbReference type="PANTHER" id="PTHR34719">
    <property type="entry name" value="NICKEL-RESPONSIVE REGULATOR"/>
    <property type="match status" value="1"/>
</dbReference>
<dbReference type="PANTHER" id="PTHR34719:SF2">
    <property type="entry name" value="NICKEL-RESPONSIVE REGULATOR"/>
    <property type="match status" value="1"/>
</dbReference>
<dbReference type="Pfam" id="PF08753">
    <property type="entry name" value="NikR_C"/>
    <property type="match status" value="1"/>
</dbReference>
<dbReference type="Pfam" id="PF01402">
    <property type="entry name" value="RHH_1"/>
    <property type="match status" value="1"/>
</dbReference>
<dbReference type="SUPFAM" id="SSF55021">
    <property type="entry name" value="ACT-like"/>
    <property type="match status" value="1"/>
</dbReference>
<dbReference type="SUPFAM" id="SSF47598">
    <property type="entry name" value="Ribbon-helix-helix"/>
    <property type="match status" value="1"/>
</dbReference>
<reference key="1">
    <citation type="journal article" date="2002" name="Environ. Microbiol.">
        <title>Complete genome sequence and comparative analysis of the metabolically versatile Pseudomonas putida KT2440.</title>
        <authorList>
            <person name="Nelson K.E."/>
            <person name="Weinel C."/>
            <person name="Paulsen I.T."/>
            <person name="Dodson R.J."/>
            <person name="Hilbert H."/>
            <person name="Martins dos Santos V.A.P."/>
            <person name="Fouts D.E."/>
            <person name="Gill S.R."/>
            <person name="Pop M."/>
            <person name="Holmes M."/>
            <person name="Brinkac L.M."/>
            <person name="Beanan M.J."/>
            <person name="DeBoy R.T."/>
            <person name="Daugherty S.C."/>
            <person name="Kolonay J.F."/>
            <person name="Madupu R."/>
            <person name="Nelson W.C."/>
            <person name="White O."/>
            <person name="Peterson J.D."/>
            <person name="Khouri H.M."/>
            <person name="Hance I."/>
            <person name="Chris Lee P."/>
            <person name="Holtzapple E.K."/>
            <person name="Scanlan D."/>
            <person name="Tran K."/>
            <person name="Moazzez A."/>
            <person name="Utterback T.R."/>
            <person name="Rizzo M."/>
            <person name="Lee K."/>
            <person name="Kosack D."/>
            <person name="Moestl D."/>
            <person name="Wedler H."/>
            <person name="Lauber J."/>
            <person name="Stjepandic D."/>
            <person name="Hoheisel J."/>
            <person name="Straetz M."/>
            <person name="Heim S."/>
            <person name="Kiewitz C."/>
            <person name="Eisen J.A."/>
            <person name="Timmis K.N."/>
            <person name="Duesterhoeft A."/>
            <person name="Tuemmler B."/>
            <person name="Fraser C.M."/>
        </authorList>
    </citation>
    <scope>NUCLEOTIDE SEQUENCE [LARGE SCALE GENOMIC DNA]</scope>
    <source>
        <strain>ATCC 47054 / DSM 6125 / CFBP 8728 / NCIMB 11950 / KT2440</strain>
    </source>
</reference>
<protein>
    <recommendedName>
        <fullName evidence="1">Putative nickel-responsive regulator</fullName>
    </recommendedName>
</protein>
<feature type="chain" id="PRO_0000139293" description="Putative nickel-responsive regulator">
    <location>
        <begin position="1"/>
        <end position="138"/>
    </location>
</feature>
<feature type="binding site" evidence="1">
    <location>
        <position position="76"/>
    </location>
    <ligand>
        <name>Ni(2+)</name>
        <dbReference type="ChEBI" id="CHEBI:49786"/>
    </ligand>
</feature>
<feature type="binding site" evidence="1">
    <location>
        <position position="87"/>
    </location>
    <ligand>
        <name>Ni(2+)</name>
        <dbReference type="ChEBI" id="CHEBI:49786"/>
    </ligand>
</feature>
<feature type="binding site" evidence="1">
    <location>
        <position position="89"/>
    </location>
    <ligand>
        <name>Ni(2+)</name>
        <dbReference type="ChEBI" id="CHEBI:49786"/>
    </ligand>
</feature>
<feature type="binding site" evidence="1">
    <location>
        <position position="95"/>
    </location>
    <ligand>
        <name>Ni(2+)</name>
        <dbReference type="ChEBI" id="CHEBI:49786"/>
    </ligand>
</feature>
<proteinExistence type="inferred from homology"/>
<accession>Q88HL5</accession>